<dbReference type="EC" id="2.1.1.163" evidence="1"/>
<dbReference type="EMBL" id="AE001273">
    <property type="protein sequence ID" value="AAC68025.1"/>
    <property type="molecule type" value="Genomic_DNA"/>
</dbReference>
<dbReference type="PIR" id="D71516">
    <property type="entry name" value="D71516"/>
</dbReference>
<dbReference type="SMR" id="O84435"/>
<dbReference type="FunCoup" id="O84435">
    <property type="interactions" value="256"/>
</dbReference>
<dbReference type="STRING" id="272561.CT_428"/>
<dbReference type="EnsemblBacteria" id="AAC68025">
    <property type="protein sequence ID" value="AAC68025"/>
    <property type="gene ID" value="CT_428"/>
</dbReference>
<dbReference type="KEGG" id="ctr:CT_428"/>
<dbReference type="PATRIC" id="fig|272561.5.peg.463"/>
<dbReference type="HOGENOM" id="CLU_037990_0_0_0"/>
<dbReference type="InParanoid" id="O84435"/>
<dbReference type="OrthoDB" id="9808140at2"/>
<dbReference type="UniPathway" id="UPA00079">
    <property type="reaction ID" value="UER00169"/>
</dbReference>
<dbReference type="Proteomes" id="UP000000431">
    <property type="component" value="Chromosome"/>
</dbReference>
<dbReference type="GO" id="GO:0043770">
    <property type="term" value="F:demethylmenaquinone methyltransferase activity"/>
    <property type="evidence" value="ECO:0007669"/>
    <property type="project" value="UniProtKB-UniRule"/>
</dbReference>
<dbReference type="GO" id="GO:0008168">
    <property type="term" value="F:methyltransferase activity"/>
    <property type="evidence" value="ECO:0000318"/>
    <property type="project" value="GO_Central"/>
</dbReference>
<dbReference type="GO" id="GO:0009234">
    <property type="term" value="P:menaquinone biosynthetic process"/>
    <property type="evidence" value="ECO:0007669"/>
    <property type="project" value="UniProtKB-UniRule"/>
</dbReference>
<dbReference type="GO" id="GO:0032259">
    <property type="term" value="P:methylation"/>
    <property type="evidence" value="ECO:0007669"/>
    <property type="project" value="UniProtKB-KW"/>
</dbReference>
<dbReference type="CDD" id="cd02440">
    <property type="entry name" value="AdoMet_MTases"/>
    <property type="match status" value="1"/>
</dbReference>
<dbReference type="Gene3D" id="3.40.50.150">
    <property type="entry name" value="Vaccinia Virus protein VP39"/>
    <property type="match status" value="1"/>
</dbReference>
<dbReference type="HAMAP" id="MF_01813">
    <property type="entry name" value="MenG_UbiE_methyltr"/>
    <property type="match status" value="1"/>
</dbReference>
<dbReference type="InterPro" id="IPR029063">
    <property type="entry name" value="SAM-dependent_MTases_sf"/>
</dbReference>
<dbReference type="InterPro" id="IPR004033">
    <property type="entry name" value="UbiE/COQ5_MeTrFase"/>
</dbReference>
<dbReference type="InterPro" id="IPR023576">
    <property type="entry name" value="UbiE/COQ5_MeTrFase_CS"/>
</dbReference>
<dbReference type="NCBIfam" id="TIGR01934">
    <property type="entry name" value="MenG_MenH_UbiE"/>
    <property type="match status" value="1"/>
</dbReference>
<dbReference type="NCBIfam" id="NF001244">
    <property type="entry name" value="PRK00216.1-5"/>
    <property type="match status" value="1"/>
</dbReference>
<dbReference type="PANTHER" id="PTHR43591:SF24">
    <property type="entry name" value="2-METHOXY-6-POLYPRENYL-1,4-BENZOQUINOL METHYLASE, MITOCHONDRIAL"/>
    <property type="match status" value="1"/>
</dbReference>
<dbReference type="PANTHER" id="PTHR43591">
    <property type="entry name" value="METHYLTRANSFERASE"/>
    <property type="match status" value="1"/>
</dbReference>
<dbReference type="Pfam" id="PF01209">
    <property type="entry name" value="Ubie_methyltran"/>
    <property type="match status" value="1"/>
</dbReference>
<dbReference type="SUPFAM" id="SSF53335">
    <property type="entry name" value="S-adenosyl-L-methionine-dependent methyltransferases"/>
    <property type="match status" value="1"/>
</dbReference>
<dbReference type="PROSITE" id="PS51608">
    <property type="entry name" value="SAM_MT_UBIE"/>
    <property type="match status" value="1"/>
</dbReference>
<dbReference type="PROSITE" id="PS01183">
    <property type="entry name" value="UBIE_1"/>
    <property type="match status" value="1"/>
</dbReference>
<dbReference type="PROSITE" id="PS01184">
    <property type="entry name" value="UBIE_2"/>
    <property type="match status" value="1"/>
</dbReference>
<accession>O84435</accession>
<comment type="function">
    <text evidence="1">Methyltransferase required for the conversion of demethylmenaquinol (DMKH2) to menaquinol (MKH2).</text>
</comment>
<comment type="catalytic activity">
    <reaction evidence="1">
        <text>a 2-demethylmenaquinol + S-adenosyl-L-methionine = a menaquinol + S-adenosyl-L-homocysteine + H(+)</text>
        <dbReference type="Rhea" id="RHEA:42640"/>
        <dbReference type="Rhea" id="RHEA-COMP:9539"/>
        <dbReference type="Rhea" id="RHEA-COMP:9563"/>
        <dbReference type="ChEBI" id="CHEBI:15378"/>
        <dbReference type="ChEBI" id="CHEBI:18151"/>
        <dbReference type="ChEBI" id="CHEBI:55437"/>
        <dbReference type="ChEBI" id="CHEBI:57856"/>
        <dbReference type="ChEBI" id="CHEBI:59789"/>
        <dbReference type="EC" id="2.1.1.163"/>
    </reaction>
</comment>
<comment type="pathway">
    <text evidence="1">Quinol/quinone metabolism; menaquinone biosynthesis; menaquinol from 1,4-dihydroxy-2-naphthoate: step 2/2.</text>
</comment>
<comment type="similarity">
    <text evidence="1">Belongs to the class I-like SAM-binding methyltransferase superfamily. MenG/UbiE family.</text>
</comment>
<protein>
    <recommendedName>
        <fullName evidence="1">Demethylmenaquinone methyltransferase</fullName>
        <ecNumber evidence="1">2.1.1.163</ecNumber>
    </recommendedName>
</protein>
<name>MENG_CHLTR</name>
<reference key="1">
    <citation type="journal article" date="1998" name="Science">
        <title>Genome sequence of an obligate intracellular pathogen of humans: Chlamydia trachomatis.</title>
        <authorList>
            <person name="Stephens R.S."/>
            <person name="Kalman S."/>
            <person name="Lammel C.J."/>
            <person name="Fan J."/>
            <person name="Marathe R."/>
            <person name="Aravind L."/>
            <person name="Mitchell W.P."/>
            <person name="Olinger L."/>
            <person name="Tatusov R.L."/>
            <person name="Zhao Q."/>
            <person name="Koonin E.V."/>
            <person name="Davis R.W."/>
        </authorList>
    </citation>
    <scope>NUCLEOTIDE SEQUENCE [LARGE SCALE GENOMIC DNA]</scope>
    <source>
        <strain>ATCC VR-885 / DSM 19411 / UW-3/Cx</strain>
    </source>
</reference>
<sequence length="229" mass="25843">MTDFHNKPNIQIMFDSLAPTYDKINGILSLGLHIAWNNALVSLLGETNHLLDLCAGTGRVALSYVQNYPRASATLVDFSTKMLENVQKRHPSAPFSYITSDVTHLPLPDNTFRLASMAYGLRNLSYPLEALREVYRVLQPGGHLGILELTRPATYNPVYLLHKLYLNLVVPSVGRFYSGNSYAYSYLKESIRDLPRDAALEAIFHAAHLRPIRKRKLLFGTATIWILEK</sequence>
<proteinExistence type="inferred from homology"/>
<evidence type="ECO:0000255" key="1">
    <source>
        <dbReference type="HAMAP-Rule" id="MF_01813"/>
    </source>
</evidence>
<gene>
    <name evidence="1" type="primary">menG</name>
    <name type="ordered locus">CT_428</name>
</gene>
<organism>
    <name type="scientific">Chlamydia trachomatis serovar D (strain ATCC VR-885 / DSM 19411 / UW-3/Cx)</name>
    <dbReference type="NCBI Taxonomy" id="272561"/>
    <lineage>
        <taxon>Bacteria</taxon>
        <taxon>Pseudomonadati</taxon>
        <taxon>Chlamydiota</taxon>
        <taxon>Chlamydiia</taxon>
        <taxon>Chlamydiales</taxon>
        <taxon>Chlamydiaceae</taxon>
        <taxon>Chlamydia/Chlamydophila group</taxon>
        <taxon>Chlamydia</taxon>
    </lineage>
</organism>
<feature type="chain" id="PRO_0000193267" description="Demethylmenaquinone methyltransferase">
    <location>
        <begin position="1"/>
        <end position="229"/>
    </location>
</feature>
<feature type="binding site" evidence="1">
    <location>
        <position position="57"/>
    </location>
    <ligand>
        <name>S-adenosyl-L-methionine</name>
        <dbReference type="ChEBI" id="CHEBI:59789"/>
    </ligand>
</feature>
<feature type="binding site" evidence="1">
    <location>
        <position position="77"/>
    </location>
    <ligand>
        <name>S-adenosyl-L-methionine</name>
        <dbReference type="ChEBI" id="CHEBI:59789"/>
    </ligand>
</feature>
<feature type="binding site" evidence="1">
    <location>
        <begin position="101"/>
        <end position="102"/>
    </location>
    <ligand>
        <name>S-adenosyl-L-methionine</name>
        <dbReference type="ChEBI" id="CHEBI:59789"/>
    </ligand>
</feature>
<keyword id="KW-0474">Menaquinone biosynthesis</keyword>
<keyword id="KW-0489">Methyltransferase</keyword>
<keyword id="KW-1185">Reference proteome</keyword>
<keyword id="KW-0949">S-adenosyl-L-methionine</keyword>
<keyword id="KW-0808">Transferase</keyword>